<reference key="1">
    <citation type="journal article" date="2007" name="PLoS ONE">
        <title>Genome sequencing shows that European isolates of Francisella tularensis subspecies tularensis are almost identical to US laboratory strain Schu S4.</title>
        <authorList>
            <person name="Chaudhuri R.R."/>
            <person name="Ren C.-P."/>
            <person name="Desmond L."/>
            <person name="Vincent G.A."/>
            <person name="Silman N.J."/>
            <person name="Brehm J.K."/>
            <person name="Elmore M.J."/>
            <person name="Hudson M.J."/>
            <person name="Forsman M."/>
            <person name="Isherwood K.E."/>
            <person name="Gurycova D."/>
            <person name="Minton N.P."/>
            <person name="Titball R.W."/>
            <person name="Pallen M.J."/>
            <person name="Vipond R."/>
        </authorList>
    </citation>
    <scope>NUCLEOTIDE SEQUENCE [LARGE SCALE GENOMIC DNA]</scope>
    <source>
        <strain>FSC 198</strain>
    </source>
</reference>
<keyword id="KW-0066">ATP synthesis</keyword>
<keyword id="KW-0997">Cell inner membrane</keyword>
<keyword id="KW-1003">Cell membrane</keyword>
<keyword id="KW-0138">CF(0)</keyword>
<keyword id="KW-0375">Hydrogen ion transport</keyword>
<keyword id="KW-0406">Ion transport</keyword>
<keyword id="KW-0472">Membrane</keyword>
<keyword id="KW-0812">Transmembrane</keyword>
<keyword id="KW-1133">Transmembrane helix</keyword>
<keyword id="KW-0813">Transport</keyword>
<feature type="chain" id="PRO_0000368494" description="ATP synthase subunit b">
    <location>
        <begin position="1"/>
        <end position="156"/>
    </location>
</feature>
<feature type="transmembrane region" description="Helical" evidence="1">
    <location>
        <begin position="5"/>
        <end position="27"/>
    </location>
</feature>
<proteinExistence type="inferred from homology"/>
<gene>
    <name evidence="1" type="primary">atpF</name>
    <name type="ordered locus">FTF0060</name>
</gene>
<comment type="function">
    <text evidence="1">F(1)F(0) ATP synthase produces ATP from ADP in the presence of a proton or sodium gradient. F-type ATPases consist of two structural domains, F(1) containing the extramembraneous catalytic core and F(0) containing the membrane proton channel, linked together by a central stalk and a peripheral stalk. During catalysis, ATP synthesis in the catalytic domain of F(1) is coupled via a rotary mechanism of the central stalk subunits to proton translocation.</text>
</comment>
<comment type="function">
    <text evidence="1">Component of the F(0) channel, it forms part of the peripheral stalk, linking F(1) to F(0).</text>
</comment>
<comment type="subunit">
    <text evidence="1">F-type ATPases have 2 components, F(1) - the catalytic core - and F(0) - the membrane proton channel. F(1) has five subunits: alpha(3), beta(3), gamma(1), delta(1), epsilon(1). F(0) has three main subunits: a(1), b(2) and c(10-14). The alpha and beta chains form an alternating ring which encloses part of the gamma chain. F(1) is attached to F(0) by a central stalk formed by the gamma and epsilon chains, while a peripheral stalk is formed by the delta and b chains.</text>
</comment>
<comment type="subcellular location">
    <subcellularLocation>
        <location evidence="1">Cell inner membrane</location>
        <topology evidence="1">Single-pass membrane protein</topology>
    </subcellularLocation>
</comment>
<comment type="similarity">
    <text evidence="1">Belongs to the ATPase B chain family.</text>
</comment>
<sequence>MDINITLIGQMITFAIFVGFTMKFVWPPLRKALEERREKIAEGLASADRASRELEVAKRQSAEILREAKAKATEIVENAYVRAHKVDEQAKEEAIAAADKIKSMAIAEIEQEKVKAKEQLKQELVNLAMAAASKIIAASVDEKASKKVLEDFVEKV</sequence>
<name>ATPF_FRAT1</name>
<evidence type="ECO:0000255" key="1">
    <source>
        <dbReference type="HAMAP-Rule" id="MF_01398"/>
    </source>
</evidence>
<organism>
    <name type="scientific">Francisella tularensis subsp. tularensis (strain FSC 198)</name>
    <dbReference type="NCBI Taxonomy" id="393115"/>
    <lineage>
        <taxon>Bacteria</taxon>
        <taxon>Pseudomonadati</taxon>
        <taxon>Pseudomonadota</taxon>
        <taxon>Gammaproteobacteria</taxon>
        <taxon>Thiotrichales</taxon>
        <taxon>Francisellaceae</taxon>
        <taxon>Francisella</taxon>
    </lineage>
</organism>
<accession>Q14K10</accession>
<protein>
    <recommendedName>
        <fullName evidence="1">ATP synthase subunit b</fullName>
    </recommendedName>
    <alternativeName>
        <fullName evidence="1">ATP synthase F(0) sector subunit b</fullName>
    </alternativeName>
    <alternativeName>
        <fullName evidence="1">ATPase subunit I</fullName>
    </alternativeName>
    <alternativeName>
        <fullName evidence="1">F-type ATPase subunit b</fullName>
        <shortName evidence="1">F-ATPase subunit b</shortName>
    </alternativeName>
</protein>
<dbReference type="EMBL" id="AM286280">
    <property type="protein sequence ID" value="CAL08076.1"/>
    <property type="molecule type" value="Genomic_DNA"/>
</dbReference>
<dbReference type="RefSeq" id="WP_003019758.1">
    <property type="nucleotide sequence ID" value="NC_008245.1"/>
</dbReference>
<dbReference type="SMR" id="Q14K10"/>
<dbReference type="KEGG" id="ftf:FTF0060"/>
<dbReference type="HOGENOM" id="CLU_079215_4_5_6"/>
<dbReference type="GO" id="GO:0005886">
    <property type="term" value="C:plasma membrane"/>
    <property type="evidence" value="ECO:0007669"/>
    <property type="project" value="UniProtKB-SubCell"/>
</dbReference>
<dbReference type="GO" id="GO:0045259">
    <property type="term" value="C:proton-transporting ATP synthase complex"/>
    <property type="evidence" value="ECO:0007669"/>
    <property type="project" value="UniProtKB-KW"/>
</dbReference>
<dbReference type="GO" id="GO:0046933">
    <property type="term" value="F:proton-transporting ATP synthase activity, rotational mechanism"/>
    <property type="evidence" value="ECO:0007669"/>
    <property type="project" value="UniProtKB-UniRule"/>
</dbReference>
<dbReference type="GO" id="GO:0046961">
    <property type="term" value="F:proton-transporting ATPase activity, rotational mechanism"/>
    <property type="evidence" value="ECO:0007669"/>
    <property type="project" value="TreeGrafter"/>
</dbReference>
<dbReference type="CDD" id="cd06503">
    <property type="entry name" value="ATP-synt_Fo_b"/>
    <property type="match status" value="1"/>
</dbReference>
<dbReference type="Gene3D" id="6.10.250.1580">
    <property type="match status" value="1"/>
</dbReference>
<dbReference type="HAMAP" id="MF_01398">
    <property type="entry name" value="ATP_synth_b_bprime"/>
    <property type="match status" value="1"/>
</dbReference>
<dbReference type="InterPro" id="IPR028987">
    <property type="entry name" value="ATP_synth_B-like_membr_sf"/>
</dbReference>
<dbReference type="InterPro" id="IPR002146">
    <property type="entry name" value="ATP_synth_b/b'su_bac/chlpt"/>
</dbReference>
<dbReference type="InterPro" id="IPR005864">
    <property type="entry name" value="ATP_synth_F0_bsu_bac"/>
</dbReference>
<dbReference type="InterPro" id="IPR050059">
    <property type="entry name" value="ATP_synthase_B_chain"/>
</dbReference>
<dbReference type="NCBIfam" id="TIGR01144">
    <property type="entry name" value="ATP_synt_b"/>
    <property type="match status" value="1"/>
</dbReference>
<dbReference type="NCBIfam" id="NF004411">
    <property type="entry name" value="PRK05759.1-2"/>
    <property type="match status" value="1"/>
</dbReference>
<dbReference type="PANTHER" id="PTHR33445:SF1">
    <property type="entry name" value="ATP SYNTHASE SUBUNIT B"/>
    <property type="match status" value="1"/>
</dbReference>
<dbReference type="PANTHER" id="PTHR33445">
    <property type="entry name" value="ATP SYNTHASE SUBUNIT B', CHLOROPLASTIC"/>
    <property type="match status" value="1"/>
</dbReference>
<dbReference type="Pfam" id="PF00430">
    <property type="entry name" value="ATP-synt_B"/>
    <property type="match status" value="1"/>
</dbReference>
<dbReference type="SUPFAM" id="SSF81573">
    <property type="entry name" value="F1F0 ATP synthase subunit B, membrane domain"/>
    <property type="match status" value="1"/>
</dbReference>